<protein>
    <recommendedName>
        <fullName evidence="1">Pyridoxal 5'-phosphate synthase subunit PdxS</fullName>
        <shortName evidence="1">PLP synthase subunit PdxS</shortName>
        <ecNumber evidence="1">4.3.3.6</ecNumber>
    </recommendedName>
    <alternativeName>
        <fullName evidence="1">Pdx1</fullName>
    </alternativeName>
</protein>
<sequence>MRLYELSFDEVERFFYKLAELRDTVKDSGLMSYVPELVSLTGQVQGTTRVKHAFPIFQKGGVVMDVTSVEQAGIAEEAGAVSVMVLDKLPYDVRKAGGVARMADPKIIEEVMNSITIPVMAKVRIGHYYEAKVLEALGVDMIDESEVLTPADEEHHINKWEFKIPFVNGARNLGEGLRRISEGASMIRTKGEPGTGNVSEAVKHIKIVNQELRALLSMAEEDRVKKSRELQVPYELVELTVKYARLPVVNFAAGGIATPADAALMMWLGTDGIFVGSGIFKSEDPLERAKAIVLATAGWEDPEIVLEAQKMISEHKAMMGIDIKTLKPEELMQVRGA</sequence>
<gene>
    <name evidence="1" type="primary">pdxS</name>
    <name type="ordered locus">Msed_1923</name>
</gene>
<organism>
    <name type="scientific">Metallosphaera sedula (strain ATCC 51363 / DSM 5348 / JCM 9185 / NBRC 15509 / TH2)</name>
    <dbReference type="NCBI Taxonomy" id="399549"/>
    <lineage>
        <taxon>Archaea</taxon>
        <taxon>Thermoproteota</taxon>
        <taxon>Thermoprotei</taxon>
        <taxon>Sulfolobales</taxon>
        <taxon>Sulfolobaceae</taxon>
        <taxon>Metallosphaera</taxon>
    </lineage>
</organism>
<evidence type="ECO:0000255" key="1">
    <source>
        <dbReference type="HAMAP-Rule" id="MF_01824"/>
    </source>
</evidence>
<feature type="chain" id="PRO_1000073686" description="Pyridoxal 5'-phosphate synthase subunit PdxS">
    <location>
        <begin position="1"/>
        <end position="337"/>
    </location>
</feature>
<feature type="active site" description="Schiff-base intermediate with D-ribose 5-phosphate" evidence="1">
    <location>
        <position position="122"/>
    </location>
</feature>
<feature type="binding site" evidence="1">
    <location>
        <position position="65"/>
    </location>
    <ligand>
        <name>D-ribose 5-phosphate</name>
        <dbReference type="ChEBI" id="CHEBI:78346"/>
    </ligand>
</feature>
<feature type="binding site" evidence="1">
    <location>
        <position position="194"/>
    </location>
    <ligand>
        <name>D-ribose 5-phosphate</name>
        <dbReference type="ChEBI" id="CHEBI:78346"/>
    </ligand>
</feature>
<feature type="binding site" evidence="1">
    <location>
        <position position="206"/>
    </location>
    <ligand>
        <name>D-glyceraldehyde 3-phosphate</name>
        <dbReference type="ChEBI" id="CHEBI:59776"/>
    </ligand>
</feature>
<feature type="binding site" evidence="1">
    <location>
        <position position="255"/>
    </location>
    <ligand>
        <name>D-ribose 5-phosphate</name>
        <dbReference type="ChEBI" id="CHEBI:78346"/>
    </ligand>
</feature>
<feature type="binding site" evidence="1">
    <location>
        <begin position="276"/>
        <end position="277"/>
    </location>
    <ligand>
        <name>D-ribose 5-phosphate</name>
        <dbReference type="ChEBI" id="CHEBI:78346"/>
    </ligand>
</feature>
<keyword id="KW-0456">Lyase</keyword>
<keyword id="KW-0663">Pyridoxal phosphate</keyword>
<keyword id="KW-1185">Reference proteome</keyword>
<keyword id="KW-0704">Schiff base</keyword>
<reference key="1">
    <citation type="journal article" date="2008" name="Appl. Environ. Microbiol.">
        <title>The genome sequence of the metal-mobilizing, extremely thermoacidophilic archaeon Metallosphaera sedula provides insights into bioleaching-associated metabolism.</title>
        <authorList>
            <person name="Auernik K.S."/>
            <person name="Maezato Y."/>
            <person name="Blum P.H."/>
            <person name="Kelly R.M."/>
        </authorList>
    </citation>
    <scope>NUCLEOTIDE SEQUENCE [LARGE SCALE GENOMIC DNA]</scope>
    <source>
        <strain>ATCC 51363 / DSM 5348 / JCM 9185 / NBRC 15509 / TH2</strain>
    </source>
</reference>
<proteinExistence type="inferred from homology"/>
<comment type="function">
    <text evidence="1">Catalyzes the formation of pyridoxal 5'-phosphate from ribose 5-phosphate (RBP), glyceraldehyde 3-phosphate (G3P) and ammonia. The ammonia is provided by the PdxT subunit. Can also use ribulose 5-phosphate and dihydroxyacetone phosphate as substrates, resulting from enzyme-catalyzed isomerization of RBP and G3P, respectively.</text>
</comment>
<comment type="catalytic activity">
    <reaction evidence="1">
        <text>aldehydo-D-ribose 5-phosphate + D-glyceraldehyde 3-phosphate + L-glutamine = pyridoxal 5'-phosphate + L-glutamate + phosphate + 3 H2O + H(+)</text>
        <dbReference type="Rhea" id="RHEA:31507"/>
        <dbReference type="ChEBI" id="CHEBI:15377"/>
        <dbReference type="ChEBI" id="CHEBI:15378"/>
        <dbReference type="ChEBI" id="CHEBI:29985"/>
        <dbReference type="ChEBI" id="CHEBI:43474"/>
        <dbReference type="ChEBI" id="CHEBI:58273"/>
        <dbReference type="ChEBI" id="CHEBI:58359"/>
        <dbReference type="ChEBI" id="CHEBI:59776"/>
        <dbReference type="ChEBI" id="CHEBI:597326"/>
        <dbReference type="EC" id="4.3.3.6"/>
    </reaction>
</comment>
<comment type="pathway">
    <text evidence="1">Cofactor biosynthesis; pyridoxal 5'-phosphate biosynthesis.</text>
</comment>
<comment type="subunit">
    <text evidence="1">In the presence of PdxT, forms a dodecamer of heterodimers.</text>
</comment>
<comment type="similarity">
    <text evidence="1">Belongs to the PdxS/SNZ family.</text>
</comment>
<accession>A4YI11</accession>
<name>PDXS_METS5</name>
<dbReference type="EC" id="4.3.3.6" evidence="1"/>
<dbReference type="EMBL" id="CP000682">
    <property type="protein sequence ID" value="ABP96063.1"/>
    <property type="molecule type" value="Genomic_DNA"/>
</dbReference>
<dbReference type="RefSeq" id="WP_012021850.1">
    <property type="nucleotide sequence ID" value="NZ_CP139956.1"/>
</dbReference>
<dbReference type="SMR" id="A4YI11"/>
<dbReference type="STRING" id="399549.Msed_1923"/>
<dbReference type="GeneID" id="97612970"/>
<dbReference type="KEGG" id="mse:Msed_1923"/>
<dbReference type="eggNOG" id="arCOG04075">
    <property type="taxonomic scope" value="Archaea"/>
</dbReference>
<dbReference type="HOGENOM" id="CLU_055352_1_0_2"/>
<dbReference type="UniPathway" id="UPA00245"/>
<dbReference type="Proteomes" id="UP000000242">
    <property type="component" value="Chromosome"/>
</dbReference>
<dbReference type="GO" id="GO:0036381">
    <property type="term" value="F:pyridoxal 5'-phosphate synthase (glutamine hydrolysing) activity"/>
    <property type="evidence" value="ECO:0007669"/>
    <property type="project" value="UniProtKB-UniRule"/>
</dbReference>
<dbReference type="GO" id="GO:0006520">
    <property type="term" value="P:amino acid metabolic process"/>
    <property type="evidence" value="ECO:0007669"/>
    <property type="project" value="TreeGrafter"/>
</dbReference>
<dbReference type="GO" id="GO:0042823">
    <property type="term" value="P:pyridoxal phosphate biosynthetic process"/>
    <property type="evidence" value="ECO:0007669"/>
    <property type="project" value="UniProtKB-UniRule"/>
</dbReference>
<dbReference type="GO" id="GO:0008615">
    <property type="term" value="P:pyridoxine biosynthetic process"/>
    <property type="evidence" value="ECO:0007669"/>
    <property type="project" value="TreeGrafter"/>
</dbReference>
<dbReference type="CDD" id="cd04727">
    <property type="entry name" value="pdxS"/>
    <property type="match status" value="1"/>
</dbReference>
<dbReference type="FunFam" id="3.20.20.70:FF:000001">
    <property type="entry name" value="Pyridoxine biosynthesis protein PDX1"/>
    <property type="match status" value="1"/>
</dbReference>
<dbReference type="Gene3D" id="3.20.20.70">
    <property type="entry name" value="Aldolase class I"/>
    <property type="match status" value="1"/>
</dbReference>
<dbReference type="HAMAP" id="MF_01824">
    <property type="entry name" value="PdxS"/>
    <property type="match status" value="1"/>
</dbReference>
<dbReference type="InterPro" id="IPR013785">
    <property type="entry name" value="Aldolase_TIM"/>
</dbReference>
<dbReference type="InterPro" id="IPR001852">
    <property type="entry name" value="PdxS/SNZ"/>
</dbReference>
<dbReference type="InterPro" id="IPR033755">
    <property type="entry name" value="PdxS/SNZ_N"/>
</dbReference>
<dbReference type="InterPro" id="IPR011060">
    <property type="entry name" value="RibuloseP-bd_barrel"/>
</dbReference>
<dbReference type="NCBIfam" id="NF003215">
    <property type="entry name" value="PRK04180.1"/>
    <property type="match status" value="1"/>
</dbReference>
<dbReference type="PANTHER" id="PTHR31829">
    <property type="entry name" value="PYRIDOXAL 5'-PHOSPHATE SYNTHASE SUBUNIT SNZ1-RELATED"/>
    <property type="match status" value="1"/>
</dbReference>
<dbReference type="PANTHER" id="PTHR31829:SF0">
    <property type="entry name" value="PYRIDOXAL 5'-PHOSPHATE SYNTHASE SUBUNIT SNZ1-RELATED"/>
    <property type="match status" value="1"/>
</dbReference>
<dbReference type="Pfam" id="PF01680">
    <property type="entry name" value="SOR_SNZ"/>
    <property type="match status" value="1"/>
</dbReference>
<dbReference type="PIRSF" id="PIRSF029271">
    <property type="entry name" value="Pdx1"/>
    <property type="match status" value="1"/>
</dbReference>
<dbReference type="SUPFAM" id="SSF51366">
    <property type="entry name" value="Ribulose-phoshate binding barrel"/>
    <property type="match status" value="1"/>
</dbReference>
<dbReference type="PROSITE" id="PS01235">
    <property type="entry name" value="PDXS_SNZ_1"/>
    <property type="match status" value="1"/>
</dbReference>
<dbReference type="PROSITE" id="PS51129">
    <property type="entry name" value="PDXS_SNZ_2"/>
    <property type="match status" value="1"/>
</dbReference>